<dbReference type="EC" id="2.6.99.2" evidence="1"/>
<dbReference type="EMBL" id="BA000031">
    <property type="protein sequence ID" value="BAC60832.1"/>
    <property type="molecule type" value="Genomic_DNA"/>
</dbReference>
<dbReference type="RefSeq" id="NP_798948.1">
    <property type="nucleotide sequence ID" value="NC_004603.1"/>
</dbReference>
<dbReference type="RefSeq" id="WP_005482574.1">
    <property type="nucleotide sequence ID" value="NC_004603.1"/>
</dbReference>
<dbReference type="SMR" id="Q87LP2"/>
<dbReference type="GeneID" id="1190093"/>
<dbReference type="KEGG" id="vpa:VP2569"/>
<dbReference type="PATRIC" id="fig|223926.6.peg.2467"/>
<dbReference type="eggNOG" id="COG0854">
    <property type="taxonomic scope" value="Bacteria"/>
</dbReference>
<dbReference type="HOGENOM" id="CLU_074563_0_0_6"/>
<dbReference type="UniPathway" id="UPA00244">
    <property type="reaction ID" value="UER00313"/>
</dbReference>
<dbReference type="Proteomes" id="UP000002493">
    <property type="component" value="Chromosome 1"/>
</dbReference>
<dbReference type="GO" id="GO:0005829">
    <property type="term" value="C:cytosol"/>
    <property type="evidence" value="ECO:0007669"/>
    <property type="project" value="TreeGrafter"/>
</dbReference>
<dbReference type="GO" id="GO:0033856">
    <property type="term" value="F:pyridoxine 5'-phosphate synthase activity"/>
    <property type="evidence" value="ECO:0007669"/>
    <property type="project" value="UniProtKB-EC"/>
</dbReference>
<dbReference type="GO" id="GO:0008615">
    <property type="term" value="P:pyridoxine biosynthetic process"/>
    <property type="evidence" value="ECO:0007669"/>
    <property type="project" value="UniProtKB-UniRule"/>
</dbReference>
<dbReference type="CDD" id="cd00003">
    <property type="entry name" value="PNPsynthase"/>
    <property type="match status" value="1"/>
</dbReference>
<dbReference type="FunFam" id="3.20.20.70:FF:000042">
    <property type="entry name" value="Pyridoxine 5'-phosphate synthase"/>
    <property type="match status" value="1"/>
</dbReference>
<dbReference type="Gene3D" id="3.20.20.70">
    <property type="entry name" value="Aldolase class I"/>
    <property type="match status" value="1"/>
</dbReference>
<dbReference type="HAMAP" id="MF_00279">
    <property type="entry name" value="PdxJ"/>
    <property type="match status" value="1"/>
</dbReference>
<dbReference type="InterPro" id="IPR013785">
    <property type="entry name" value="Aldolase_TIM"/>
</dbReference>
<dbReference type="InterPro" id="IPR004569">
    <property type="entry name" value="PyrdxlP_synth_PdxJ"/>
</dbReference>
<dbReference type="InterPro" id="IPR036130">
    <property type="entry name" value="Pyridoxine-5'_phos_synth"/>
</dbReference>
<dbReference type="NCBIfam" id="TIGR00559">
    <property type="entry name" value="pdxJ"/>
    <property type="match status" value="1"/>
</dbReference>
<dbReference type="NCBIfam" id="NF003623">
    <property type="entry name" value="PRK05265.1-1"/>
    <property type="match status" value="1"/>
</dbReference>
<dbReference type="NCBIfam" id="NF003624">
    <property type="entry name" value="PRK05265.1-2"/>
    <property type="match status" value="1"/>
</dbReference>
<dbReference type="NCBIfam" id="NF003625">
    <property type="entry name" value="PRK05265.1-3"/>
    <property type="match status" value="1"/>
</dbReference>
<dbReference type="NCBIfam" id="NF003627">
    <property type="entry name" value="PRK05265.1-5"/>
    <property type="match status" value="1"/>
</dbReference>
<dbReference type="PANTHER" id="PTHR30456">
    <property type="entry name" value="PYRIDOXINE 5'-PHOSPHATE SYNTHASE"/>
    <property type="match status" value="1"/>
</dbReference>
<dbReference type="PANTHER" id="PTHR30456:SF0">
    <property type="entry name" value="PYRIDOXINE 5'-PHOSPHATE SYNTHASE"/>
    <property type="match status" value="1"/>
</dbReference>
<dbReference type="Pfam" id="PF03740">
    <property type="entry name" value="PdxJ"/>
    <property type="match status" value="1"/>
</dbReference>
<dbReference type="SUPFAM" id="SSF63892">
    <property type="entry name" value="Pyridoxine 5'-phosphate synthase"/>
    <property type="match status" value="1"/>
</dbReference>
<gene>
    <name evidence="1" type="primary">pdxJ</name>
    <name type="ordered locus">VP2569</name>
</gene>
<name>PDXJ_VIBPA</name>
<comment type="function">
    <text evidence="1">Catalyzes the complicated ring closure reaction between the two acyclic compounds 1-deoxy-D-xylulose-5-phosphate (DXP) and 3-amino-2-oxopropyl phosphate (1-amino-acetone-3-phosphate or AAP) to form pyridoxine 5'-phosphate (PNP) and inorganic phosphate.</text>
</comment>
<comment type="catalytic activity">
    <reaction evidence="1">
        <text>3-amino-2-oxopropyl phosphate + 1-deoxy-D-xylulose 5-phosphate = pyridoxine 5'-phosphate + phosphate + 2 H2O + H(+)</text>
        <dbReference type="Rhea" id="RHEA:15265"/>
        <dbReference type="ChEBI" id="CHEBI:15377"/>
        <dbReference type="ChEBI" id="CHEBI:15378"/>
        <dbReference type="ChEBI" id="CHEBI:43474"/>
        <dbReference type="ChEBI" id="CHEBI:57279"/>
        <dbReference type="ChEBI" id="CHEBI:57792"/>
        <dbReference type="ChEBI" id="CHEBI:58589"/>
        <dbReference type="EC" id="2.6.99.2"/>
    </reaction>
</comment>
<comment type="pathway">
    <text evidence="1">Cofactor biosynthesis; pyridoxine 5'-phosphate biosynthesis; pyridoxine 5'-phosphate from D-erythrose 4-phosphate: step 5/5.</text>
</comment>
<comment type="subunit">
    <text evidence="1">Homooctamer; tetramer of dimers.</text>
</comment>
<comment type="subcellular location">
    <subcellularLocation>
        <location evidence="1">Cytoplasm</location>
    </subcellularLocation>
</comment>
<comment type="similarity">
    <text evidence="1">Belongs to the PNP synthase family.</text>
</comment>
<protein>
    <recommendedName>
        <fullName evidence="1">Pyridoxine 5'-phosphate synthase</fullName>
        <shortName evidence="1">PNP synthase</shortName>
        <ecNumber evidence="1">2.6.99.2</ecNumber>
    </recommendedName>
</protein>
<reference key="1">
    <citation type="journal article" date="2003" name="Lancet">
        <title>Genome sequence of Vibrio parahaemolyticus: a pathogenic mechanism distinct from that of V. cholerae.</title>
        <authorList>
            <person name="Makino K."/>
            <person name="Oshima K."/>
            <person name="Kurokawa K."/>
            <person name="Yokoyama K."/>
            <person name="Uda T."/>
            <person name="Tagomori K."/>
            <person name="Iijima Y."/>
            <person name="Najima M."/>
            <person name="Nakano M."/>
            <person name="Yamashita A."/>
            <person name="Kubota Y."/>
            <person name="Kimura S."/>
            <person name="Yasunaga T."/>
            <person name="Honda T."/>
            <person name="Shinagawa H."/>
            <person name="Hattori M."/>
            <person name="Iida T."/>
        </authorList>
    </citation>
    <scope>NUCLEOTIDE SEQUENCE [LARGE SCALE GENOMIC DNA]</scope>
    <source>
        <strain>RIMD 2210633</strain>
    </source>
</reference>
<proteinExistence type="inferred from homology"/>
<evidence type="ECO:0000255" key="1">
    <source>
        <dbReference type="HAMAP-Rule" id="MF_00279"/>
    </source>
</evidence>
<accession>Q87LP2</accession>
<keyword id="KW-0963">Cytoplasm</keyword>
<keyword id="KW-0664">Pyridoxine biosynthesis</keyword>
<keyword id="KW-0808">Transferase</keyword>
<feature type="chain" id="PRO_0000190136" description="Pyridoxine 5'-phosphate synthase">
    <location>
        <begin position="1"/>
        <end position="243"/>
    </location>
</feature>
<feature type="active site" description="Proton acceptor" evidence="1">
    <location>
        <position position="45"/>
    </location>
</feature>
<feature type="active site" description="Proton acceptor" evidence="1">
    <location>
        <position position="72"/>
    </location>
</feature>
<feature type="active site" description="Proton donor" evidence="1">
    <location>
        <position position="193"/>
    </location>
</feature>
<feature type="binding site" evidence="1">
    <location>
        <position position="9"/>
    </location>
    <ligand>
        <name>3-amino-2-oxopropyl phosphate</name>
        <dbReference type="ChEBI" id="CHEBI:57279"/>
    </ligand>
</feature>
<feature type="binding site" evidence="1">
    <location>
        <begin position="11"/>
        <end position="12"/>
    </location>
    <ligand>
        <name>1-deoxy-D-xylulose 5-phosphate</name>
        <dbReference type="ChEBI" id="CHEBI:57792"/>
    </ligand>
</feature>
<feature type="binding site" evidence="1">
    <location>
        <position position="20"/>
    </location>
    <ligand>
        <name>3-amino-2-oxopropyl phosphate</name>
        <dbReference type="ChEBI" id="CHEBI:57279"/>
    </ligand>
</feature>
<feature type="binding site" evidence="1">
    <location>
        <position position="47"/>
    </location>
    <ligand>
        <name>1-deoxy-D-xylulose 5-phosphate</name>
        <dbReference type="ChEBI" id="CHEBI:57792"/>
    </ligand>
</feature>
<feature type="binding site" evidence="1">
    <location>
        <position position="52"/>
    </location>
    <ligand>
        <name>1-deoxy-D-xylulose 5-phosphate</name>
        <dbReference type="ChEBI" id="CHEBI:57792"/>
    </ligand>
</feature>
<feature type="binding site" evidence="1">
    <location>
        <position position="102"/>
    </location>
    <ligand>
        <name>1-deoxy-D-xylulose 5-phosphate</name>
        <dbReference type="ChEBI" id="CHEBI:57792"/>
    </ligand>
</feature>
<feature type="binding site" evidence="1">
    <location>
        <position position="194"/>
    </location>
    <ligand>
        <name>3-amino-2-oxopropyl phosphate</name>
        <dbReference type="ChEBI" id="CHEBI:57279"/>
    </ligand>
</feature>
<feature type="binding site" evidence="1">
    <location>
        <begin position="215"/>
        <end position="216"/>
    </location>
    <ligand>
        <name>3-amino-2-oxopropyl phosphate</name>
        <dbReference type="ChEBI" id="CHEBI:57279"/>
    </ligand>
</feature>
<feature type="site" description="Transition state stabilizer" evidence="1">
    <location>
        <position position="153"/>
    </location>
</feature>
<organism>
    <name type="scientific">Vibrio parahaemolyticus serotype O3:K6 (strain RIMD 2210633)</name>
    <dbReference type="NCBI Taxonomy" id="223926"/>
    <lineage>
        <taxon>Bacteria</taxon>
        <taxon>Pseudomonadati</taxon>
        <taxon>Pseudomonadota</taxon>
        <taxon>Gammaproteobacteria</taxon>
        <taxon>Vibrionales</taxon>
        <taxon>Vibrionaceae</taxon>
        <taxon>Vibrio</taxon>
    </lineage>
</organism>
<sequence length="243" mass="26672">MSSIYLGVNIDHIATLRNARGTKYPDPVHAAEIAERAGADGITIHLREDRRHILDRDVRILRETIQTRMNLEMAVTEEMVEIALKTKPEFVCLVPEKREELTTEGGLDVVGQLDKVKAATQKLTEAGIKVSLFIDADRQQIEAAKQCGAPFIELHTGHYADAETEEEQQAELKKIAAGASYADDLGIIVNAGHGLTYHNVAPIAALPEIYELNIGHSIIGRAVFDGLEKSVAEMKALMIAARK</sequence>